<gene>
    <name evidence="1" type="primary">dapF</name>
    <name type="ordered locus">BDI_0322</name>
</gene>
<keyword id="KW-0028">Amino-acid biosynthesis</keyword>
<keyword id="KW-0963">Cytoplasm</keyword>
<keyword id="KW-0413">Isomerase</keyword>
<keyword id="KW-0457">Lysine biosynthesis</keyword>
<keyword id="KW-1185">Reference proteome</keyword>
<protein>
    <recommendedName>
        <fullName evidence="1">Diaminopimelate epimerase</fullName>
        <shortName evidence="1">DAP epimerase</shortName>
        <ecNumber evidence="1">5.1.1.7</ecNumber>
    </recommendedName>
    <alternativeName>
        <fullName evidence="1">PLP-independent amino acid racemase</fullName>
    </alternativeName>
</protein>
<evidence type="ECO:0000255" key="1">
    <source>
        <dbReference type="HAMAP-Rule" id="MF_00197"/>
    </source>
</evidence>
<organism>
    <name type="scientific">Parabacteroides distasonis (strain ATCC 8503 / DSM 20701 / CIP 104284 / JCM 5825 / NCTC 11152)</name>
    <dbReference type="NCBI Taxonomy" id="435591"/>
    <lineage>
        <taxon>Bacteria</taxon>
        <taxon>Pseudomonadati</taxon>
        <taxon>Bacteroidota</taxon>
        <taxon>Bacteroidia</taxon>
        <taxon>Bacteroidales</taxon>
        <taxon>Tannerellaceae</taxon>
        <taxon>Parabacteroides</taxon>
    </lineage>
</organism>
<dbReference type="EC" id="5.1.1.7" evidence="1"/>
<dbReference type="EMBL" id="CP000140">
    <property type="protein sequence ID" value="ABR42107.1"/>
    <property type="molecule type" value="Genomic_DNA"/>
</dbReference>
<dbReference type="RefSeq" id="WP_011965968.1">
    <property type="nucleotide sequence ID" value="NC_009615.1"/>
</dbReference>
<dbReference type="SMR" id="A6L8U3"/>
<dbReference type="STRING" id="435591.BDI_0322"/>
<dbReference type="PaxDb" id="435591-BDI_0322"/>
<dbReference type="KEGG" id="pdi:BDI_0322"/>
<dbReference type="PATRIC" id="fig|435591.13.peg.318"/>
<dbReference type="eggNOG" id="COG0253">
    <property type="taxonomic scope" value="Bacteria"/>
</dbReference>
<dbReference type="HOGENOM" id="CLU_053306_3_0_10"/>
<dbReference type="BioCyc" id="PDIS435591:G1G5A-333-MONOMER"/>
<dbReference type="UniPathway" id="UPA00034">
    <property type="reaction ID" value="UER00025"/>
</dbReference>
<dbReference type="Proteomes" id="UP000000566">
    <property type="component" value="Chromosome"/>
</dbReference>
<dbReference type="GO" id="GO:0005829">
    <property type="term" value="C:cytosol"/>
    <property type="evidence" value="ECO:0007669"/>
    <property type="project" value="TreeGrafter"/>
</dbReference>
<dbReference type="GO" id="GO:0008837">
    <property type="term" value="F:diaminopimelate epimerase activity"/>
    <property type="evidence" value="ECO:0007669"/>
    <property type="project" value="UniProtKB-UniRule"/>
</dbReference>
<dbReference type="GO" id="GO:0009089">
    <property type="term" value="P:lysine biosynthetic process via diaminopimelate"/>
    <property type="evidence" value="ECO:0007669"/>
    <property type="project" value="UniProtKB-UniRule"/>
</dbReference>
<dbReference type="Gene3D" id="3.10.310.10">
    <property type="entry name" value="Diaminopimelate Epimerase, Chain A, domain 1"/>
    <property type="match status" value="2"/>
</dbReference>
<dbReference type="HAMAP" id="MF_00197">
    <property type="entry name" value="DAP_epimerase"/>
    <property type="match status" value="1"/>
</dbReference>
<dbReference type="InterPro" id="IPR018510">
    <property type="entry name" value="DAP_epimerase_AS"/>
</dbReference>
<dbReference type="InterPro" id="IPR001653">
    <property type="entry name" value="DAP_epimerase_DapF"/>
</dbReference>
<dbReference type="NCBIfam" id="TIGR00652">
    <property type="entry name" value="DapF"/>
    <property type="match status" value="1"/>
</dbReference>
<dbReference type="PANTHER" id="PTHR31689:SF0">
    <property type="entry name" value="DIAMINOPIMELATE EPIMERASE"/>
    <property type="match status" value="1"/>
</dbReference>
<dbReference type="PANTHER" id="PTHR31689">
    <property type="entry name" value="DIAMINOPIMELATE EPIMERASE, CHLOROPLASTIC"/>
    <property type="match status" value="1"/>
</dbReference>
<dbReference type="Pfam" id="PF01678">
    <property type="entry name" value="DAP_epimerase"/>
    <property type="match status" value="2"/>
</dbReference>
<dbReference type="SUPFAM" id="SSF54506">
    <property type="entry name" value="Diaminopimelate epimerase-like"/>
    <property type="match status" value="2"/>
</dbReference>
<dbReference type="PROSITE" id="PS01326">
    <property type="entry name" value="DAP_EPIMERASE"/>
    <property type="match status" value="1"/>
</dbReference>
<name>DAPF_PARD8</name>
<comment type="function">
    <text evidence="1">Catalyzes the stereoinversion of LL-2,6-diaminopimelate (L,L-DAP) to meso-diaminopimelate (meso-DAP), a precursor of L-lysine and an essential component of the bacterial peptidoglycan.</text>
</comment>
<comment type="catalytic activity">
    <reaction evidence="1">
        <text>(2S,6S)-2,6-diaminopimelate = meso-2,6-diaminopimelate</text>
        <dbReference type="Rhea" id="RHEA:15393"/>
        <dbReference type="ChEBI" id="CHEBI:57609"/>
        <dbReference type="ChEBI" id="CHEBI:57791"/>
        <dbReference type="EC" id="5.1.1.7"/>
    </reaction>
</comment>
<comment type="pathway">
    <text evidence="1">Amino-acid biosynthesis; L-lysine biosynthesis via DAP pathway; DL-2,6-diaminopimelate from LL-2,6-diaminopimelate: step 1/1.</text>
</comment>
<comment type="subunit">
    <text evidence="1">Homodimer.</text>
</comment>
<comment type="subcellular location">
    <subcellularLocation>
        <location evidence="1">Cytoplasm</location>
    </subcellularLocation>
</comment>
<comment type="similarity">
    <text evidence="1">Belongs to the diaminopimelate epimerase family.</text>
</comment>
<accession>A6L8U3</accession>
<proteinExistence type="inferred from homology"/>
<sequence>MTKSIRFTKMHGAGNDYIYVNTMAYPIDNPEELSIAWSKPHTGIGSDGLVLIGSSDIADFSMHIYNADGSEAMMCGNASRCIGKYVYEAGLTQKNKVTLETLSGIKELQLKIEREEVTEVTVDMGMPAVGEMALEVEAGGEIYTGTVISMGNPHLVIFVDEMDQVGLASVGPLLECLPLFPDRTNVEFVQVLKPDEVRMRVWERGSGITQACGTGACATAVAGVVRGKTKRKTKVIMDGGPLTIEWDERSGKVFMTGGAVNVFEGFIKV</sequence>
<feature type="chain" id="PRO_1000011922" description="Diaminopimelate epimerase">
    <location>
        <begin position="1"/>
        <end position="269"/>
    </location>
</feature>
<feature type="active site" description="Proton donor" evidence="1">
    <location>
        <position position="75"/>
    </location>
</feature>
<feature type="active site" description="Proton acceptor" evidence="1">
    <location>
        <position position="212"/>
    </location>
</feature>
<feature type="binding site" evidence="1">
    <location>
        <position position="15"/>
    </location>
    <ligand>
        <name>substrate</name>
    </ligand>
</feature>
<feature type="binding site" evidence="1">
    <location>
        <position position="66"/>
    </location>
    <ligand>
        <name>substrate</name>
    </ligand>
</feature>
<feature type="binding site" evidence="1">
    <location>
        <begin position="76"/>
        <end position="77"/>
    </location>
    <ligand>
        <name>substrate</name>
    </ligand>
</feature>
<feature type="binding site" evidence="1">
    <location>
        <position position="152"/>
    </location>
    <ligand>
        <name>substrate</name>
    </ligand>
</feature>
<feature type="binding site" evidence="1">
    <location>
        <position position="185"/>
    </location>
    <ligand>
        <name>substrate</name>
    </ligand>
</feature>
<feature type="binding site" evidence="1">
    <location>
        <begin position="203"/>
        <end position="204"/>
    </location>
    <ligand>
        <name>substrate</name>
    </ligand>
</feature>
<feature type="binding site" evidence="1">
    <location>
        <begin position="213"/>
        <end position="214"/>
    </location>
    <ligand>
        <name>substrate</name>
    </ligand>
</feature>
<feature type="site" description="Could be important to modulate the pK values of the two catalytic cysteine residues" evidence="1">
    <location>
        <position position="154"/>
    </location>
</feature>
<feature type="site" description="Could be important to modulate the pK values of the two catalytic cysteine residues" evidence="1">
    <location>
        <position position="203"/>
    </location>
</feature>
<reference key="1">
    <citation type="journal article" date="2007" name="PLoS Biol.">
        <title>Evolution of symbiotic bacteria in the distal human intestine.</title>
        <authorList>
            <person name="Xu J."/>
            <person name="Mahowald M.A."/>
            <person name="Ley R.E."/>
            <person name="Lozupone C.A."/>
            <person name="Hamady M."/>
            <person name="Martens E.C."/>
            <person name="Henrissat B."/>
            <person name="Coutinho P.M."/>
            <person name="Minx P."/>
            <person name="Latreille P."/>
            <person name="Cordum H."/>
            <person name="Van Brunt A."/>
            <person name="Kim K."/>
            <person name="Fulton R.S."/>
            <person name="Fulton L.A."/>
            <person name="Clifton S.W."/>
            <person name="Wilson R.K."/>
            <person name="Knight R.D."/>
            <person name="Gordon J.I."/>
        </authorList>
    </citation>
    <scope>NUCLEOTIDE SEQUENCE [LARGE SCALE GENOMIC DNA]</scope>
    <source>
        <strain>ATCC 8503 / DSM 20701 / CIP 104284 / JCM 5825 / NCTC 11152</strain>
    </source>
</reference>